<sequence>MSILALVEDRPTPREVYNWRVYLLAAVASFTSCMIGYDSAFIGTTLSLQSFQNEFNWESLNTDLISANIVSLYQAGAFFGALFAYPIGHFWGRRWGLMFSALIFFLGAGMMLGANGDRGLGLIYGGRVLAGIGVGAGSNICPIYISEMAPPAIRGRLVGVYELGWQIGGVVGFWINYGVDETLAPSHKQWIIPFAVQLIPAGLLIIGALLIRESPRWLFLRGNREKGIETLAWIRNLPADHIYMVEEINMIEQSLEQQRVKIGLGFWKPFKAAWTNKRILYRLFLGSMLFLWQNGSGINAINYYSPRVFKSIGVSGGNTSLLTTGIFGVVKAVITFVWLLYLIDHFGRRNLLLVGAAGGSVCLWIVGGYIKIAKPENNPEGTQLDSGGIAAIFFFYLWTAFYTPSWNGTPWVINSEMFDPTVRSLAQACAAASNWLWNFLISRFTPQMFTSMGYGVYFFFASLMILSIVFVFFLIPETKGVPLESMETLFDKKPVWHAHSQLIRELRENEEAFRADMGASGKGGVTKEYVEEA</sequence>
<gene>
    <name type="primary">qutD</name>
    <name type="ORF">AN1138</name>
</gene>
<dbReference type="EMBL" id="X13525">
    <property type="protein sequence ID" value="CAA31879.1"/>
    <property type="molecule type" value="Genomic_DNA"/>
</dbReference>
<dbReference type="EMBL" id="AACD01000016">
    <property type="protein sequence ID" value="EAA66256.1"/>
    <property type="molecule type" value="Genomic_DNA"/>
</dbReference>
<dbReference type="EMBL" id="BN001308">
    <property type="protein sequence ID" value="CBF88069.1"/>
    <property type="molecule type" value="Genomic_DNA"/>
</dbReference>
<dbReference type="PIR" id="S08498">
    <property type="entry name" value="S08498"/>
</dbReference>
<dbReference type="RefSeq" id="XP_658742.1">
    <property type="nucleotide sequence ID" value="XM_653650.1"/>
</dbReference>
<dbReference type="SMR" id="P15325"/>
<dbReference type="STRING" id="227321.P15325"/>
<dbReference type="EnsemblFungi" id="CBF88069">
    <property type="protein sequence ID" value="CBF88069"/>
    <property type="gene ID" value="ANIA_01138"/>
</dbReference>
<dbReference type="KEGG" id="ani:ANIA_01138"/>
<dbReference type="eggNOG" id="KOG0254">
    <property type="taxonomic scope" value="Eukaryota"/>
</dbReference>
<dbReference type="HOGENOM" id="CLU_001265_30_12_1"/>
<dbReference type="InParanoid" id="P15325"/>
<dbReference type="OMA" id="PADHIYM"/>
<dbReference type="OrthoDB" id="508119at2759"/>
<dbReference type="Proteomes" id="UP000000560">
    <property type="component" value="Chromosome VIII"/>
</dbReference>
<dbReference type="GO" id="GO:0016020">
    <property type="term" value="C:membrane"/>
    <property type="evidence" value="ECO:0000318"/>
    <property type="project" value="GO_Central"/>
</dbReference>
<dbReference type="GO" id="GO:0005886">
    <property type="term" value="C:plasma membrane"/>
    <property type="evidence" value="ECO:0007669"/>
    <property type="project" value="UniProtKB-SubCell"/>
</dbReference>
<dbReference type="GO" id="GO:0005351">
    <property type="term" value="F:carbohydrate:proton symporter activity"/>
    <property type="evidence" value="ECO:0000318"/>
    <property type="project" value="GO_Central"/>
</dbReference>
<dbReference type="GO" id="GO:0008643">
    <property type="term" value="P:carbohydrate transport"/>
    <property type="evidence" value="ECO:0000318"/>
    <property type="project" value="GO_Central"/>
</dbReference>
<dbReference type="GO" id="GO:0019630">
    <property type="term" value="P:quinate metabolic process"/>
    <property type="evidence" value="ECO:0007669"/>
    <property type="project" value="UniProtKB-KW"/>
</dbReference>
<dbReference type="CDD" id="cd17356">
    <property type="entry name" value="MFS_HXT"/>
    <property type="match status" value="1"/>
</dbReference>
<dbReference type="FunFam" id="1.20.1250.20:FF:000026">
    <property type="entry name" value="MFS quinate transporter QutD"/>
    <property type="match status" value="1"/>
</dbReference>
<dbReference type="Gene3D" id="1.20.1250.20">
    <property type="entry name" value="MFS general substrate transporter like domains"/>
    <property type="match status" value="1"/>
</dbReference>
<dbReference type="InterPro" id="IPR020846">
    <property type="entry name" value="MFS_dom"/>
</dbReference>
<dbReference type="InterPro" id="IPR005828">
    <property type="entry name" value="MFS_sugar_transport-like"/>
</dbReference>
<dbReference type="InterPro" id="IPR050360">
    <property type="entry name" value="MFS_Sugar_Transporters"/>
</dbReference>
<dbReference type="InterPro" id="IPR036259">
    <property type="entry name" value="MFS_trans_sf"/>
</dbReference>
<dbReference type="InterPro" id="IPR003663">
    <property type="entry name" value="Sugar/inositol_transpt"/>
</dbReference>
<dbReference type="InterPro" id="IPR005829">
    <property type="entry name" value="Sugar_transporter_CS"/>
</dbReference>
<dbReference type="NCBIfam" id="TIGR00879">
    <property type="entry name" value="SP"/>
    <property type="match status" value="1"/>
</dbReference>
<dbReference type="PANTHER" id="PTHR48022:SF34">
    <property type="entry name" value="MAJOR FACILITATOR SUPERFAMILY (MFS) PROFILE DOMAIN-CONTAINING PROTEIN-RELATED"/>
    <property type="match status" value="1"/>
</dbReference>
<dbReference type="PANTHER" id="PTHR48022">
    <property type="entry name" value="PLASTIDIC GLUCOSE TRANSPORTER 4"/>
    <property type="match status" value="1"/>
</dbReference>
<dbReference type="Pfam" id="PF00083">
    <property type="entry name" value="Sugar_tr"/>
    <property type="match status" value="1"/>
</dbReference>
<dbReference type="PRINTS" id="PR00171">
    <property type="entry name" value="SUGRTRNSPORT"/>
</dbReference>
<dbReference type="SUPFAM" id="SSF103473">
    <property type="entry name" value="MFS general substrate transporter"/>
    <property type="match status" value="1"/>
</dbReference>
<dbReference type="PROSITE" id="PS50850">
    <property type="entry name" value="MFS"/>
    <property type="match status" value="1"/>
</dbReference>
<dbReference type="PROSITE" id="PS00216">
    <property type="entry name" value="SUGAR_TRANSPORT_1"/>
    <property type="match status" value="1"/>
</dbReference>
<dbReference type="PROSITE" id="PS00217">
    <property type="entry name" value="SUGAR_TRANSPORT_2"/>
    <property type="match status" value="1"/>
</dbReference>
<reference key="1">
    <citation type="journal article" date="1988" name="Mol. Gen. Genet.">
        <title>Molecular organisation of the quinic acid utilization (QUT) gene cluster in Aspergillus nidulans.</title>
        <authorList>
            <person name="Hawkins A.R."/>
            <person name="Lamb H.K."/>
            <person name="Smith M."/>
            <person name="Keyte J.W."/>
            <person name="Roberts C.F."/>
        </authorList>
    </citation>
    <scope>NUCLEOTIDE SEQUENCE [GENOMIC DNA]</scope>
</reference>
<reference key="2">
    <citation type="journal article" date="2005" name="Nature">
        <title>Sequencing of Aspergillus nidulans and comparative analysis with A. fumigatus and A. oryzae.</title>
        <authorList>
            <person name="Galagan J.E."/>
            <person name="Calvo S.E."/>
            <person name="Cuomo C."/>
            <person name="Ma L.-J."/>
            <person name="Wortman J.R."/>
            <person name="Batzoglou S."/>
            <person name="Lee S.-I."/>
            <person name="Bastuerkmen M."/>
            <person name="Spevak C.C."/>
            <person name="Clutterbuck J."/>
            <person name="Kapitonov V."/>
            <person name="Jurka J."/>
            <person name="Scazzocchio C."/>
            <person name="Farman M.L."/>
            <person name="Butler J."/>
            <person name="Purcell S."/>
            <person name="Harris S."/>
            <person name="Braus G.H."/>
            <person name="Draht O."/>
            <person name="Busch S."/>
            <person name="D'Enfert C."/>
            <person name="Bouchier C."/>
            <person name="Goldman G.H."/>
            <person name="Bell-Pedersen D."/>
            <person name="Griffiths-Jones S."/>
            <person name="Doonan J.H."/>
            <person name="Yu J."/>
            <person name="Vienken K."/>
            <person name="Pain A."/>
            <person name="Freitag M."/>
            <person name="Selker E.U."/>
            <person name="Archer D.B."/>
            <person name="Penalva M.A."/>
            <person name="Oakley B.R."/>
            <person name="Momany M."/>
            <person name="Tanaka T."/>
            <person name="Kumagai T."/>
            <person name="Asai K."/>
            <person name="Machida M."/>
            <person name="Nierman W.C."/>
            <person name="Denning D.W."/>
            <person name="Caddick M.X."/>
            <person name="Hynes M."/>
            <person name="Paoletti M."/>
            <person name="Fischer R."/>
            <person name="Miller B.L."/>
            <person name="Dyer P.S."/>
            <person name="Sachs M.S."/>
            <person name="Osmani S.A."/>
            <person name="Birren B.W."/>
        </authorList>
    </citation>
    <scope>NUCLEOTIDE SEQUENCE [LARGE SCALE GENOMIC DNA]</scope>
    <source>
        <strain>FGSC A4 / ATCC 38163 / CBS 112.46 / NRRL 194 / M139</strain>
    </source>
</reference>
<reference key="3">
    <citation type="journal article" date="2009" name="Fungal Genet. Biol.">
        <title>The 2008 update of the Aspergillus nidulans genome annotation: a community effort.</title>
        <authorList>
            <person name="Wortman J.R."/>
            <person name="Gilsenan J.M."/>
            <person name="Joardar V."/>
            <person name="Deegan J."/>
            <person name="Clutterbuck J."/>
            <person name="Andersen M.R."/>
            <person name="Archer D."/>
            <person name="Bencina M."/>
            <person name="Braus G."/>
            <person name="Coutinho P."/>
            <person name="von Dohren H."/>
            <person name="Doonan J."/>
            <person name="Driessen A.J."/>
            <person name="Durek P."/>
            <person name="Espeso E."/>
            <person name="Fekete E."/>
            <person name="Flipphi M."/>
            <person name="Estrada C.G."/>
            <person name="Geysens S."/>
            <person name="Goldman G."/>
            <person name="de Groot P.W."/>
            <person name="Hansen K."/>
            <person name="Harris S.D."/>
            <person name="Heinekamp T."/>
            <person name="Helmstaedt K."/>
            <person name="Henrissat B."/>
            <person name="Hofmann G."/>
            <person name="Homan T."/>
            <person name="Horio T."/>
            <person name="Horiuchi H."/>
            <person name="James S."/>
            <person name="Jones M."/>
            <person name="Karaffa L."/>
            <person name="Karanyi Z."/>
            <person name="Kato M."/>
            <person name="Keller N."/>
            <person name="Kelly D.E."/>
            <person name="Kiel J.A."/>
            <person name="Kim J.M."/>
            <person name="van der Klei I.J."/>
            <person name="Klis F.M."/>
            <person name="Kovalchuk A."/>
            <person name="Krasevec N."/>
            <person name="Kubicek C.P."/>
            <person name="Liu B."/>
            <person name="Maccabe A."/>
            <person name="Meyer V."/>
            <person name="Mirabito P."/>
            <person name="Miskei M."/>
            <person name="Mos M."/>
            <person name="Mullins J."/>
            <person name="Nelson D.R."/>
            <person name="Nielsen J."/>
            <person name="Oakley B.R."/>
            <person name="Osmani S.A."/>
            <person name="Pakula T."/>
            <person name="Paszewski A."/>
            <person name="Paulsen I."/>
            <person name="Pilsyk S."/>
            <person name="Pocsi I."/>
            <person name="Punt P.J."/>
            <person name="Ram A.F."/>
            <person name="Ren Q."/>
            <person name="Robellet X."/>
            <person name="Robson G."/>
            <person name="Seiboth B."/>
            <person name="van Solingen P."/>
            <person name="Specht T."/>
            <person name="Sun J."/>
            <person name="Taheri-Talesh N."/>
            <person name="Takeshita N."/>
            <person name="Ussery D."/>
            <person name="vanKuyk P.A."/>
            <person name="Visser H."/>
            <person name="van de Vondervoort P.J."/>
            <person name="de Vries R.P."/>
            <person name="Walton J."/>
            <person name="Xiang X."/>
            <person name="Xiong Y."/>
            <person name="Zeng A.P."/>
            <person name="Brandt B.W."/>
            <person name="Cornell M.J."/>
            <person name="van den Hondel C.A."/>
            <person name="Visser J."/>
            <person name="Oliver S.G."/>
            <person name="Turner G."/>
        </authorList>
    </citation>
    <scope>GENOME REANNOTATION</scope>
    <source>
        <strain>FGSC A4 / ATCC 38163 / CBS 112.46 / NRRL 194 / M139</strain>
    </source>
</reference>
<reference key="4">
    <citation type="thesis" date="2008" institute="University of Adelaide" country="Australia">
        <title>Identifying target proteins of the CreB deubiquitination enzyme in the fungus Aspergillus nidulans.</title>
        <authorList>
            <person name="Kamlangdee N."/>
        </authorList>
    </citation>
    <scope>UBIQUITINATION</scope>
    <scope>INTERACTION WITH CREB</scope>
    <scope>DEUBIQUITINATION BY CREB</scope>
</reference>
<organism>
    <name type="scientific">Emericella nidulans (strain FGSC A4 / ATCC 38163 / CBS 112.46 / NRRL 194 / M139)</name>
    <name type="common">Aspergillus nidulans</name>
    <dbReference type="NCBI Taxonomy" id="227321"/>
    <lineage>
        <taxon>Eukaryota</taxon>
        <taxon>Fungi</taxon>
        <taxon>Dikarya</taxon>
        <taxon>Ascomycota</taxon>
        <taxon>Pezizomycotina</taxon>
        <taxon>Eurotiomycetes</taxon>
        <taxon>Eurotiomycetidae</taxon>
        <taxon>Eurotiales</taxon>
        <taxon>Aspergillaceae</taxon>
        <taxon>Aspergillus</taxon>
        <taxon>Aspergillus subgen. Nidulantes</taxon>
    </lineage>
</organism>
<keyword id="KW-1003">Cell membrane</keyword>
<keyword id="KW-0472">Membrane</keyword>
<keyword id="KW-0672">Quinate metabolism</keyword>
<keyword id="KW-1185">Reference proteome</keyword>
<keyword id="KW-0812">Transmembrane</keyword>
<keyword id="KW-1133">Transmembrane helix</keyword>
<keyword id="KW-0813">Transport</keyword>
<keyword id="KW-0832">Ubl conjugation</keyword>
<evidence type="ECO:0000255" key="1"/>
<evidence type="ECO:0000269" key="2">
    <source ref="4"/>
</evidence>
<evidence type="ECO:0000305" key="3"/>
<protein>
    <recommendedName>
        <fullName>Quinate permease</fullName>
    </recommendedName>
    <alternativeName>
        <fullName>Quinate transporter</fullName>
    </alternativeName>
</protein>
<feature type="chain" id="PRO_0000050448" description="Quinate permease">
    <location>
        <begin position="1"/>
        <end position="533"/>
    </location>
</feature>
<feature type="topological domain" description="Cytoplasmic" evidence="1">
    <location>
        <begin position="1"/>
        <end position="21"/>
    </location>
</feature>
<feature type="transmembrane region" description="Helical; Name=1" evidence="1">
    <location>
        <begin position="22"/>
        <end position="42"/>
    </location>
</feature>
<feature type="topological domain" description="Extracellular" evidence="1">
    <location>
        <begin position="43"/>
        <end position="67"/>
    </location>
</feature>
<feature type="transmembrane region" description="Helical; Name=2" evidence="1">
    <location>
        <begin position="68"/>
        <end position="88"/>
    </location>
</feature>
<feature type="topological domain" description="Cytoplasmic" evidence="1">
    <location>
        <begin position="89"/>
        <end position="94"/>
    </location>
</feature>
<feature type="transmembrane region" description="Helical; Name=3" evidence="1">
    <location>
        <begin position="95"/>
        <end position="115"/>
    </location>
</feature>
<feature type="topological domain" description="Extracellular" evidence="1">
    <location>
        <begin position="116"/>
        <end position="127"/>
    </location>
</feature>
<feature type="transmembrane region" description="Helical; Name=4" evidence="1">
    <location>
        <begin position="128"/>
        <end position="148"/>
    </location>
</feature>
<feature type="topological domain" description="Cytoplasmic" evidence="1">
    <location>
        <begin position="149"/>
        <end position="156"/>
    </location>
</feature>
<feature type="transmembrane region" description="Helical; Name=5" evidence="1">
    <location>
        <begin position="157"/>
        <end position="177"/>
    </location>
</feature>
<feature type="topological domain" description="Extracellular" evidence="1">
    <location>
        <begin position="178"/>
        <end position="191"/>
    </location>
</feature>
<feature type="transmembrane region" description="Helical; Name=6" evidence="1">
    <location>
        <begin position="192"/>
        <end position="212"/>
    </location>
</feature>
<feature type="topological domain" description="Cytoplasmic" evidence="1">
    <location>
        <begin position="213"/>
        <end position="282"/>
    </location>
</feature>
<feature type="transmembrane region" description="Helical; Name=7" evidence="1">
    <location>
        <begin position="283"/>
        <end position="303"/>
    </location>
</feature>
<feature type="topological domain" description="Extracellular" evidence="1">
    <location>
        <begin position="304"/>
        <end position="324"/>
    </location>
</feature>
<feature type="transmembrane region" description="Helical; Name=8" evidence="1">
    <location>
        <begin position="325"/>
        <end position="346"/>
    </location>
</feature>
<feature type="topological domain" description="Cytoplasmic" evidence="1">
    <location>
        <begin position="347"/>
        <end position="349"/>
    </location>
</feature>
<feature type="transmembrane region" description="Helical; Name=9" evidence="1">
    <location>
        <begin position="350"/>
        <end position="370"/>
    </location>
</feature>
<feature type="topological domain" description="Extracellular" evidence="1">
    <location>
        <begin position="371"/>
        <end position="385"/>
    </location>
</feature>
<feature type="transmembrane region" description="Helical; Name=10" evidence="1">
    <location>
        <begin position="386"/>
        <end position="406"/>
    </location>
</feature>
<feature type="topological domain" description="Cytoplasmic" evidence="1">
    <location>
        <begin position="407"/>
        <end position="431"/>
    </location>
</feature>
<feature type="transmembrane region" description="Helical; Name=11" evidence="1">
    <location>
        <begin position="432"/>
        <end position="452"/>
    </location>
</feature>
<feature type="topological domain" description="Extracellular" evidence="1">
    <location>
        <begin position="453"/>
        <end position="454"/>
    </location>
</feature>
<feature type="transmembrane region" description="Helical; Name=12" evidence="1">
    <location>
        <begin position="455"/>
        <end position="475"/>
    </location>
</feature>
<feature type="topological domain" description="Cytoplasmic" evidence="1">
    <location>
        <begin position="476"/>
        <end position="533"/>
    </location>
</feature>
<feature type="sequence conflict" description="In Ref. 1; CAA31879." evidence="3" ref="1">
    <original>A</original>
    <variation>R</variation>
    <location>
        <position position="75"/>
    </location>
</feature>
<feature type="sequence conflict" description="In Ref. 1; CAA31879." evidence="3" ref="1">
    <original>P</original>
    <variation>S</variation>
    <location>
        <position position="151"/>
    </location>
</feature>
<feature type="sequence conflict" description="In Ref. 1; CAA31879." evidence="3" ref="1">
    <original>K</original>
    <variation>T</variation>
    <location>
        <position position="331"/>
    </location>
</feature>
<comment type="function">
    <text>Integral membrane transporter that imports quinic acid to be catabolized as a carbon source.</text>
</comment>
<comment type="subunit">
    <text evidence="2">Interacts with creB.</text>
</comment>
<comment type="subcellular location">
    <subcellularLocation>
        <location>Cell membrane</location>
        <topology>Multi-pass membrane protein</topology>
    </subcellularLocation>
    <subcellularLocation>
        <location evidence="3">Cell membrane</location>
    </subcellularLocation>
</comment>
<comment type="PTM">
    <text evidence="2">Ubiquitinated. Deubiquitinated by creB, probably to control its activity or amount.</text>
</comment>
<comment type="similarity">
    <text evidence="3">Belongs to the major facilitator superfamily. Sugar transporter (TC 2.A.1.1) family.</text>
</comment>
<proteinExistence type="evidence at protein level"/>
<accession>P15325</accession>
<accession>C8VTA9</accession>
<accession>Q5BE92</accession>
<name>QUTD_EMENI</name>